<evidence type="ECO:0000255" key="1">
    <source>
        <dbReference type="HAMAP-Rule" id="MF_00122"/>
    </source>
</evidence>
<comment type="function">
    <text evidence="1">Allows the formation of correctly charged Asn-tRNA(Asn) or Gln-tRNA(Gln) through the transamidation of misacylated Asp-tRNA(Asn) or Glu-tRNA(Gln) in organisms which lack either or both of asparaginyl-tRNA or glutaminyl-tRNA synthetases. The reaction takes place in the presence of glutamine and ATP through an activated phospho-Asp-tRNA(Asn) or phospho-Glu-tRNA(Gln).</text>
</comment>
<comment type="catalytic activity">
    <reaction evidence="1">
        <text>L-glutamyl-tRNA(Gln) + L-glutamine + ATP + H2O = L-glutaminyl-tRNA(Gln) + L-glutamate + ADP + phosphate + H(+)</text>
        <dbReference type="Rhea" id="RHEA:17521"/>
        <dbReference type="Rhea" id="RHEA-COMP:9681"/>
        <dbReference type="Rhea" id="RHEA-COMP:9684"/>
        <dbReference type="ChEBI" id="CHEBI:15377"/>
        <dbReference type="ChEBI" id="CHEBI:15378"/>
        <dbReference type="ChEBI" id="CHEBI:29985"/>
        <dbReference type="ChEBI" id="CHEBI:30616"/>
        <dbReference type="ChEBI" id="CHEBI:43474"/>
        <dbReference type="ChEBI" id="CHEBI:58359"/>
        <dbReference type="ChEBI" id="CHEBI:78520"/>
        <dbReference type="ChEBI" id="CHEBI:78521"/>
        <dbReference type="ChEBI" id="CHEBI:456216"/>
    </reaction>
</comment>
<comment type="catalytic activity">
    <reaction evidence="1">
        <text>L-aspartyl-tRNA(Asn) + L-glutamine + ATP + H2O = L-asparaginyl-tRNA(Asn) + L-glutamate + ADP + phosphate + 2 H(+)</text>
        <dbReference type="Rhea" id="RHEA:14513"/>
        <dbReference type="Rhea" id="RHEA-COMP:9674"/>
        <dbReference type="Rhea" id="RHEA-COMP:9677"/>
        <dbReference type="ChEBI" id="CHEBI:15377"/>
        <dbReference type="ChEBI" id="CHEBI:15378"/>
        <dbReference type="ChEBI" id="CHEBI:29985"/>
        <dbReference type="ChEBI" id="CHEBI:30616"/>
        <dbReference type="ChEBI" id="CHEBI:43474"/>
        <dbReference type="ChEBI" id="CHEBI:58359"/>
        <dbReference type="ChEBI" id="CHEBI:78515"/>
        <dbReference type="ChEBI" id="CHEBI:78516"/>
        <dbReference type="ChEBI" id="CHEBI:456216"/>
    </reaction>
</comment>
<comment type="subunit">
    <text evidence="1">Heterotrimer of A, B and C subunits.</text>
</comment>
<comment type="similarity">
    <text evidence="1">Belongs to the GatC family.</text>
</comment>
<feature type="chain" id="PRO_0000105349" description="Aspartyl/glutamyl-tRNA(Asn/Gln) amidotransferase subunit C">
    <location>
        <begin position="1"/>
        <end position="97"/>
    </location>
</feature>
<keyword id="KW-0067">ATP-binding</keyword>
<keyword id="KW-0436">Ligase</keyword>
<keyword id="KW-0547">Nucleotide-binding</keyword>
<keyword id="KW-0648">Protein biosynthesis</keyword>
<keyword id="KW-1185">Reference proteome</keyword>
<proteinExistence type="inferred from homology"/>
<protein>
    <recommendedName>
        <fullName evidence="1">Aspartyl/glutamyl-tRNA(Asn/Gln) amidotransferase subunit C</fullName>
        <shortName evidence="1">Asp/Glu-ADT subunit C</shortName>
        <ecNumber evidence="1">6.3.5.-</ecNumber>
    </recommendedName>
</protein>
<dbReference type="EC" id="6.3.5.-" evidence="1"/>
<dbReference type="EMBL" id="BA000039">
    <property type="protein sequence ID" value="BAC09076.1"/>
    <property type="molecule type" value="Genomic_DNA"/>
</dbReference>
<dbReference type="RefSeq" id="NP_682314.1">
    <property type="nucleotide sequence ID" value="NC_004113.1"/>
</dbReference>
<dbReference type="RefSeq" id="WP_011057364.1">
    <property type="nucleotide sequence ID" value="NC_004113.1"/>
</dbReference>
<dbReference type="SMR" id="Q8DIQ7"/>
<dbReference type="STRING" id="197221.gene:10748124"/>
<dbReference type="EnsemblBacteria" id="BAC09076">
    <property type="protein sequence ID" value="BAC09076"/>
    <property type="gene ID" value="BAC09076"/>
</dbReference>
<dbReference type="KEGG" id="tel:tsl1524"/>
<dbReference type="PATRIC" id="fig|197221.4.peg.1601"/>
<dbReference type="eggNOG" id="COG0721">
    <property type="taxonomic scope" value="Bacteria"/>
</dbReference>
<dbReference type="Proteomes" id="UP000000440">
    <property type="component" value="Chromosome"/>
</dbReference>
<dbReference type="GO" id="GO:0050566">
    <property type="term" value="F:asparaginyl-tRNA synthase (glutamine-hydrolyzing) activity"/>
    <property type="evidence" value="ECO:0007669"/>
    <property type="project" value="RHEA"/>
</dbReference>
<dbReference type="GO" id="GO:0005524">
    <property type="term" value="F:ATP binding"/>
    <property type="evidence" value="ECO:0007669"/>
    <property type="project" value="UniProtKB-KW"/>
</dbReference>
<dbReference type="GO" id="GO:0050567">
    <property type="term" value="F:glutaminyl-tRNA synthase (glutamine-hydrolyzing) activity"/>
    <property type="evidence" value="ECO:0007669"/>
    <property type="project" value="UniProtKB-UniRule"/>
</dbReference>
<dbReference type="GO" id="GO:0070681">
    <property type="term" value="P:glutaminyl-tRNAGln biosynthesis via transamidation"/>
    <property type="evidence" value="ECO:0007669"/>
    <property type="project" value="TreeGrafter"/>
</dbReference>
<dbReference type="GO" id="GO:0006450">
    <property type="term" value="P:regulation of translational fidelity"/>
    <property type="evidence" value="ECO:0007669"/>
    <property type="project" value="InterPro"/>
</dbReference>
<dbReference type="GO" id="GO:0006412">
    <property type="term" value="P:translation"/>
    <property type="evidence" value="ECO:0007669"/>
    <property type="project" value="UniProtKB-UniRule"/>
</dbReference>
<dbReference type="Gene3D" id="1.10.20.60">
    <property type="entry name" value="Glu-tRNAGln amidotransferase C subunit, N-terminal domain"/>
    <property type="match status" value="1"/>
</dbReference>
<dbReference type="HAMAP" id="MF_00122">
    <property type="entry name" value="GatC"/>
    <property type="match status" value="1"/>
</dbReference>
<dbReference type="InterPro" id="IPR036113">
    <property type="entry name" value="Asp/Glu-ADT_sf_sub_c"/>
</dbReference>
<dbReference type="InterPro" id="IPR003837">
    <property type="entry name" value="GatC"/>
</dbReference>
<dbReference type="NCBIfam" id="TIGR00135">
    <property type="entry name" value="gatC"/>
    <property type="match status" value="1"/>
</dbReference>
<dbReference type="PANTHER" id="PTHR15004">
    <property type="entry name" value="GLUTAMYL-TRNA(GLN) AMIDOTRANSFERASE SUBUNIT C, MITOCHONDRIAL"/>
    <property type="match status" value="1"/>
</dbReference>
<dbReference type="PANTHER" id="PTHR15004:SF0">
    <property type="entry name" value="GLUTAMYL-TRNA(GLN) AMIDOTRANSFERASE SUBUNIT C, MITOCHONDRIAL"/>
    <property type="match status" value="1"/>
</dbReference>
<dbReference type="Pfam" id="PF02686">
    <property type="entry name" value="GatC"/>
    <property type="match status" value="1"/>
</dbReference>
<dbReference type="SUPFAM" id="SSF141000">
    <property type="entry name" value="Glu-tRNAGln amidotransferase C subunit"/>
    <property type="match status" value="1"/>
</dbReference>
<sequence length="97" mass="10984">MTTKVITAEDVRKVAHLARLAIDESEIEALTQQLDSILDYVNQLSELDVTEVPPTTRAIEVSNVTRPDVLAPWPNREDLLAIAPEREDDFFRVPKIM</sequence>
<reference key="1">
    <citation type="journal article" date="2002" name="DNA Res.">
        <title>Complete genome structure of the thermophilic cyanobacterium Thermosynechococcus elongatus BP-1.</title>
        <authorList>
            <person name="Nakamura Y."/>
            <person name="Kaneko T."/>
            <person name="Sato S."/>
            <person name="Ikeuchi M."/>
            <person name="Katoh H."/>
            <person name="Sasamoto S."/>
            <person name="Watanabe A."/>
            <person name="Iriguchi M."/>
            <person name="Kawashima K."/>
            <person name="Kimura T."/>
            <person name="Kishida Y."/>
            <person name="Kiyokawa C."/>
            <person name="Kohara M."/>
            <person name="Matsumoto M."/>
            <person name="Matsuno A."/>
            <person name="Nakazaki N."/>
            <person name="Shimpo S."/>
            <person name="Sugimoto M."/>
            <person name="Takeuchi C."/>
            <person name="Yamada M."/>
            <person name="Tabata S."/>
        </authorList>
    </citation>
    <scope>NUCLEOTIDE SEQUENCE [LARGE SCALE GENOMIC DNA]</scope>
    <source>
        <strain>NIES-2133 / IAM M-273 / BP-1</strain>
    </source>
</reference>
<organism>
    <name type="scientific">Thermosynechococcus vestitus (strain NIES-2133 / IAM M-273 / BP-1)</name>
    <dbReference type="NCBI Taxonomy" id="197221"/>
    <lineage>
        <taxon>Bacteria</taxon>
        <taxon>Bacillati</taxon>
        <taxon>Cyanobacteriota</taxon>
        <taxon>Cyanophyceae</taxon>
        <taxon>Acaryochloridales</taxon>
        <taxon>Thermosynechococcaceae</taxon>
        <taxon>Thermosynechococcus</taxon>
    </lineage>
</organism>
<accession>Q8DIQ7</accession>
<gene>
    <name evidence="1" type="primary">gatC</name>
    <name type="ordered locus">tsl1524</name>
</gene>
<name>GATC_THEVB</name>